<feature type="chain" id="PRO_0000449342" description="Beta-lactamase-like protein str5">
    <location>
        <begin position="1"/>
        <end position="278"/>
    </location>
</feature>
<feature type="transmembrane region" description="Helical" evidence="1">
    <location>
        <begin position="20"/>
        <end position="37"/>
    </location>
</feature>
<feature type="glycosylation site" description="N-linked (GlcNAc...) asparagine" evidence="2">
    <location>
        <position position="112"/>
    </location>
</feature>
<name>STR5_STRTC</name>
<organism>
    <name type="scientific">Strobilurus tenacellus</name>
    <dbReference type="NCBI Taxonomy" id="41251"/>
    <lineage>
        <taxon>Eukaryota</taxon>
        <taxon>Fungi</taxon>
        <taxon>Dikarya</taxon>
        <taxon>Basidiomycota</taxon>
        <taxon>Agaricomycotina</taxon>
        <taxon>Agaricomycetes</taxon>
        <taxon>Agaricomycetidae</taxon>
        <taxon>Agaricales</taxon>
        <taxon>Marasmiineae</taxon>
        <taxon>Physalacriaceae</taxon>
        <taxon>Strobilurus</taxon>
    </lineage>
</organism>
<keyword id="KW-0325">Glycoprotein</keyword>
<keyword id="KW-0378">Hydrolase</keyword>
<keyword id="KW-0472">Membrane</keyword>
<keyword id="KW-0812">Transmembrane</keyword>
<keyword id="KW-1133">Transmembrane helix</keyword>
<sequence length="278" mass="30695">MGSDLTHLEGRPPQRWQWRVFVLAALLSATFAFFTHTCSSPLPQRCRPYLPNVFNKHSLQHNEPEVRDALLAVDSFVRQSFHENPEIDGLVAAVVTANGAIYETALGPLKANETRPEDRGAVDRYSIFRLASGSKLFAMLEILILRERGALQLDDPIAKYLPQFAHKHGGWANEDDIDEGPITIRHLASHMSGMTREYPRGNMDHWPHSLEGIGPPPMNGAPFPDTLEETVLGISHYPLNLPTSTYPVYSNAGMALLGQIAVVANAAAERSQGVDVAR</sequence>
<evidence type="ECO:0000255" key="1"/>
<evidence type="ECO:0000255" key="2">
    <source>
        <dbReference type="PROSITE-ProRule" id="PRU00498"/>
    </source>
</evidence>
<evidence type="ECO:0000269" key="3">
    <source>
    </source>
</evidence>
<evidence type="ECO:0000269" key="4">
    <source>
    </source>
</evidence>
<evidence type="ECO:0000269" key="5">
    <source>
    </source>
</evidence>
<evidence type="ECO:0000303" key="6">
    <source>
    </source>
</evidence>
<evidence type="ECO:0000303" key="7">
    <source>
    </source>
</evidence>
<evidence type="ECO:0000303" key="8">
    <source>
    </source>
</evidence>
<evidence type="ECO:0000305" key="9"/>
<evidence type="ECO:0000305" key="10">
    <source>
    </source>
</evidence>
<accession>A0A3B1EFQ0</accession>
<proteinExistence type="evidence at protein level"/>
<dbReference type="EC" id="3.5.-.-" evidence="10"/>
<dbReference type="EMBL" id="KY070339">
    <property type="protein sequence ID" value="ATV82115.1"/>
    <property type="molecule type" value="Genomic_DNA"/>
</dbReference>
<dbReference type="SMR" id="A0A3B1EFQ0"/>
<dbReference type="GlyCosmos" id="A0A3B1EFQ0">
    <property type="glycosylation" value="1 site, No reported glycans"/>
</dbReference>
<dbReference type="GO" id="GO:0016020">
    <property type="term" value="C:membrane"/>
    <property type="evidence" value="ECO:0007669"/>
    <property type="project" value="UniProtKB-SubCell"/>
</dbReference>
<dbReference type="GO" id="GO:0016787">
    <property type="term" value="F:hydrolase activity"/>
    <property type="evidence" value="ECO:0007669"/>
    <property type="project" value="UniProtKB-KW"/>
</dbReference>
<dbReference type="Gene3D" id="3.40.710.10">
    <property type="entry name" value="DD-peptidase/beta-lactamase superfamily"/>
    <property type="match status" value="1"/>
</dbReference>
<dbReference type="InterPro" id="IPR001466">
    <property type="entry name" value="Beta-lactam-related"/>
</dbReference>
<dbReference type="InterPro" id="IPR012338">
    <property type="entry name" value="Beta-lactam/transpept-like"/>
</dbReference>
<dbReference type="InterPro" id="IPR051478">
    <property type="entry name" value="Beta-lactamase-like_AB/R"/>
</dbReference>
<dbReference type="PANTHER" id="PTHR22935:SF95">
    <property type="entry name" value="BETA-LACTAMASE-LIKE 1-RELATED"/>
    <property type="match status" value="1"/>
</dbReference>
<dbReference type="PANTHER" id="PTHR22935">
    <property type="entry name" value="PENICILLIN-BINDING PROTEIN"/>
    <property type="match status" value="1"/>
</dbReference>
<dbReference type="Pfam" id="PF00144">
    <property type="entry name" value="Beta-lactamase"/>
    <property type="match status" value="1"/>
</dbReference>
<dbReference type="SUPFAM" id="SSF56601">
    <property type="entry name" value="beta-lactamase/transpeptidase-like"/>
    <property type="match status" value="1"/>
</dbReference>
<reference key="1">
    <citation type="journal article" date="2018" name="Nat. Commun.">
        <title>Strobilurin biosynthesis in Basidiomycete fungi.</title>
        <authorList>
            <person name="Nofiani R."/>
            <person name="de Mattos-Shipley K."/>
            <person name="Lebe K.E."/>
            <person name="Han L.C."/>
            <person name="Iqbal Z."/>
            <person name="Bailey A.M."/>
            <person name="Willis C.L."/>
            <person name="Simpson T.J."/>
            <person name="Cox R.J."/>
        </authorList>
    </citation>
    <scope>NUCLEOTIDE SEQUENCE [GENOMIC DNA]</scope>
    <scope>FUNCTION</scope>
    <scope>BIOTECHNOLOGY</scope>
    <source>
        <strain>CBS 621.79</strain>
    </source>
</reference>
<reference key="2">
    <citation type="journal article" date="1977" name="J. Antibiot.">
        <title>The strobilurins--new antifungal antibiotics from the basidiomycete Strobilurus tenacellus.</title>
        <authorList>
            <person name="Anke T."/>
            <person name="Oberwinkler F."/>
            <person name="Steglich W."/>
            <person name="Schramm G."/>
        </authorList>
    </citation>
    <scope>BIOTECHNOLOGY</scope>
</reference>
<reference key="3">
    <citation type="journal article" date="1981" name="FEBS Lett.">
        <title>Oudemansin, strobilurin A, strobilurin B and myxothiazol: new inhibitors of the bc1 segment of the respiratory chain with an E-beta-methoxyacrylate system as common structural element.</title>
        <authorList>
            <person name="Becker W.F."/>
            <person name="von Jagow G."/>
            <person name="Anke T."/>
            <person name="Steglich W."/>
        </authorList>
    </citation>
    <scope>BIOTECHNOLOGY</scope>
</reference>
<reference key="4">
    <citation type="journal article" date="1999" name="Angew. Chem. Int. Ed.">
        <title>Strobilurins: evolution of a new class of active substances.</title>
        <authorList>
            <person name="Sauter H."/>
            <person name="Steglich W."/>
            <person name="Anke T."/>
        </authorList>
    </citation>
    <scope>REVIEW ON BIOTECHNOLOGY</scope>
</reference>
<reference key="5">
    <citation type="journal article" date="2002" name="Pest Manag. Sci.">
        <title>The strobilurin fungicides.</title>
        <authorList>
            <person name="Bartlett D.W."/>
            <person name="Clough J.M."/>
            <person name="Godwin J.R."/>
            <person name="Hall A.A."/>
            <person name="Hamer M."/>
            <person name="Parr-Dobrzanski B."/>
        </authorList>
    </citation>
    <scope>REVIEW ON BIOTECHNOLOGY</scope>
</reference>
<gene>
    <name evidence="8" type="primary">str5</name>
</gene>
<protein>
    <recommendedName>
        <fullName evidence="8">Beta-lactamase-like protein str5</fullName>
        <ecNumber evidence="10">3.5.-.-</ecNumber>
    </recommendedName>
    <alternativeName>
        <fullName evidence="8">Strobilurin A biosynthesis cluster protein r5</fullName>
    </alternativeName>
</protein>
<comment type="function">
    <text evidence="3 10">Beta-lactamase-like protein; part of the gene cluster that mediates the biosynthesis of strobilurin A, an antifungal polyketide that contains a key beta-methoxyacrylate toxophore that targets the complex III of the mitochondrial electron transport chain (PubMed:30258052). Strobilurin biosynthesis begins with construction of benzoyl CoA by step-wise elimination of ammonia from phenylalanine by the phenylalanine ammonia-lyase str11, oxygenation by str8 and retro-Claisen reaction to form benzoic acid, which is activated to its CoA thiolester benzoyl CoA by the dedicated CoA ligase str10 (PubMed:30258052). Benzoyl CoA forms the starter unit for the highly reducing polyketide synthase stpks1 that produces the polyketide prestrobilutin A (PubMed:30258052). The FAD-dependent oxygenase str9 then catalyzes the key oxidative rearrangement responsible for the creation of the beta-methoxyacrylate toxophore (PubMed:30258052). Str9 performs epoxidation of the 2,3 olefin of prestrobilutin A, followed by Meinwald rearrangement to furnish the aldehyde intermediate (Probable). Rapid enolization of the aldehyde intermediate would give the beta-methoxyacrylate skeleton and methylations catalyzed by str2 and str3 complete the synthesis and lead to the production of strobilurin A (Probable). The short-chain dehydrogenase stl2 and the dehydrogenase str4 play a role in the shunt pathway leading to the production of bolineol (PubMed:30258052). The cluster encodes no obvious halogenase gene that could be involved in production of strobilurin B, nor any obvious dimethylallyl-transferase that could be involved in the production of strobilurin G (Probable). It is possible that unknown proteins encoded in, or near, the cluster (such as str1 or stl1) may form new classes of halogenases or dimethylally-transferases, or that the responsible genes are located elsewhere on the genome (Probable). Similarly, proteins encoded by str5/str6 hydrolases appear to have no chemical role in the biosynthesis of strobilurin A (Probable). Finally, no obvious self-resistance gene is found within the cluster (Probable).</text>
</comment>
<comment type="pathway">
    <text evidence="10">Mycotoxin biosynthesis.</text>
</comment>
<comment type="subcellular location">
    <subcellularLocation>
        <location evidence="1">Membrane</location>
        <topology evidence="1">Single-pass membrane protein</topology>
    </subcellularLocation>
</comment>
<comment type="biotechnology">
    <text evidence="4 5 6 7 8">The structure of strobilurin A was used for the development of the major class of beta-methoxyacrylate agricultural fungicides since its beta-methoxyacrylate toxophore targets the Qo site of complex III of the mitochondrial electron transport chain and prevents adenosine triphosphate synthesis (PubMed:563391, PubMed:6271595). Compounds such as azoxystrobin (Syngenta) and Kresoxim methyl (BASF) are among the most widely used fungicides worldwide (PubMed:12146165, PubMed:29711574). This class of antifungals are used as effective treatments against a broad range of destructive fungal plant pathogens and make significant contributions to food security (PubMed:12146165, PubMed:29711574). The strobilurin fungicides are estimated to have been worth 3.4 billion dollars in 2015 and they make up 25% of the fungicide market and 6.7% of the total crop protection market (PubMed:30258052).</text>
</comment>
<comment type="similarity">
    <text evidence="9">Belongs to the beta-lactamase family.</text>
</comment>
<comment type="caution">
    <text evidence="10">Str5 and str6 form two genes in S.tenacellus whereas they are fused in close related species.</text>
</comment>